<comment type="function">
    <text evidence="1">Is required not only for elongation of protein synthesis but also for the initiation of all mRNA translation through initiator tRNA(fMet) aminoacylation.</text>
</comment>
<comment type="catalytic activity">
    <reaction evidence="1">
        <text>tRNA(Met) + L-methionine + ATP = L-methionyl-tRNA(Met) + AMP + diphosphate</text>
        <dbReference type="Rhea" id="RHEA:13481"/>
        <dbReference type="Rhea" id="RHEA-COMP:9667"/>
        <dbReference type="Rhea" id="RHEA-COMP:9698"/>
        <dbReference type="ChEBI" id="CHEBI:30616"/>
        <dbReference type="ChEBI" id="CHEBI:33019"/>
        <dbReference type="ChEBI" id="CHEBI:57844"/>
        <dbReference type="ChEBI" id="CHEBI:78442"/>
        <dbReference type="ChEBI" id="CHEBI:78530"/>
        <dbReference type="ChEBI" id="CHEBI:456215"/>
        <dbReference type="EC" id="6.1.1.10"/>
    </reaction>
</comment>
<comment type="cofactor">
    <cofactor evidence="1">
        <name>Zn(2+)</name>
        <dbReference type="ChEBI" id="CHEBI:29105"/>
    </cofactor>
    <text evidence="1">Binds 1 zinc ion per subunit.</text>
</comment>
<comment type="subunit">
    <text evidence="1">Monomer.</text>
</comment>
<comment type="subcellular location">
    <subcellularLocation>
        <location evidence="1">Cytoplasm</location>
    </subcellularLocation>
</comment>
<comment type="similarity">
    <text evidence="1">Belongs to the class-I aminoacyl-tRNA synthetase family. MetG type 1 subfamily.</text>
</comment>
<feature type="chain" id="PRO_0000139098" description="Methionine--tRNA ligase 2">
    <location>
        <begin position="1"/>
        <end position="544"/>
    </location>
</feature>
<feature type="short sequence motif" description="'HIGH' region">
    <location>
        <begin position="10"/>
        <end position="20"/>
    </location>
</feature>
<feature type="short sequence motif" description="'KMSKS' region">
    <location>
        <begin position="329"/>
        <end position="333"/>
    </location>
</feature>
<feature type="binding site" evidence="1">
    <location>
        <position position="141"/>
    </location>
    <ligand>
        <name>Zn(2+)</name>
        <dbReference type="ChEBI" id="CHEBI:29105"/>
    </ligand>
</feature>
<feature type="binding site" evidence="1">
    <location>
        <position position="144"/>
    </location>
    <ligand>
        <name>Zn(2+)</name>
        <dbReference type="ChEBI" id="CHEBI:29105"/>
    </ligand>
</feature>
<feature type="binding site" evidence="1">
    <location>
        <position position="153"/>
    </location>
    <ligand>
        <name>Zn(2+)</name>
        <dbReference type="ChEBI" id="CHEBI:29105"/>
    </ligand>
</feature>
<feature type="binding site" evidence="1">
    <location>
        <position position="156"/>
    </location>
    <ligand>
        <name>Zn(2+)</name>
        <dbReference type="ChEBI" id="CHEBI:29105"/>
    </ligand>
</feature>
<feature type="binding site" evidence="1">
    <location>
        <position position="332"/>
    </location>
    <ligand>
        <name>ATP</name>
        <dbReference type="ChEBI" id="CHEBI:30616"/>
    </ligand>
</feature>
<reference key="1">
    <citation type="journal article" date="2003" name="Nature">
        <title>The genome sequence of Bacillus anthracis Ames and comparison to closely related bacteria.</title>
        <authorList>
            <person name="Read T.D."/>
            <person name="Peterson S.N."/>
            <person name="Tourasse N.J."/>
            <person name="Baillie L.W."/>
            <person name="Paulsen I.T."/>
            <person name="Nelson K.E."/>
            <person name="Tettelin H."/>
            <person name="Fouts D.E."/>
            <person name="Eisen J.A."/>
            <person name="Gill S.R."/>
            <person name="Holtzapple E.K."/>
            <person name="Okstad O.A."/>
            <person name="Helgason E."/>
            <person name="Rilstone J."/>
            <person name="Wu M."/>
            <person name="Kolonay J.F."/>
            <person name="Beanan M.J."/>
            <person name="Dodson R.J."/>
            <person name="Brinkac L.M."/>
            <person name="Gwinn M.L."/>
            <person name="DeBoy R.T."/>
            <person name="Madpu R."/>
            <person name="Daugherty S.C."/>
            <person name="Durkin A.S."/>
            <person name="Haft D.H."/>
            <person name="Nelson W.C."/>
            <person name="Peterson J.D."/>
            <person name="Pop M."/>
            <person name="Khouri H.M."/>
            <person name="Radune D."/>
            <person name="Benton J.L."/>
            <person name="Mahamoud Y."/>
            <person name="Jiang L."/>
            <person name="Hance I.R."/>
            <person name="Weidman J.F."/>
            <person name="Berry K.J."/>
            <person name="Plaut R.D."/>
            <person name="Wolf A.M."/>
            <person name="Watkins K.L."/>
            <person name="Nierman W.C."/>
            <person name="Hazen A."/>
            <person name="Cline R.T."/>
            <person name="Redmond C."/>
            <person name="Thwaite J.E."/>
            <person name="White O."/>
            <person name="Salzberg S.L."/>
            <person name="Thomason B."/>
            <person name="Friedlander A.M."/>
            <person name="Koehler T.M."/>
            <person name="Hanna P.C."/>
            <person name="Kolstoe A.-B."/>
            <person name="Fraser C.M."/>
        </authorList>
    </citation>
    <scope>NUCLEOTIDE SEQUENCE [LARGE SCALE GENOMIC DNA]</scope>
    <source>
        <strain>Ames / isolate Porton</strain>
    </source>
</reference>
<reference key="2">
    <citation type="journal article" date="2009" name="J. Bacteriol.">
        <title>The complete genome sequence of Bacillus anthracis Ames 'Ancestor'.</title>
        <authorList>
            <person name="Ravel J."/>
            <person name="Jiang L."/>
            <person name="Stanley S.T."/>
            <person name="Wilson M.R."/>
            <person name="Decker R.S."/>
            <person name="Read T.D."/>
            <person name="Worsham P."/>
            <person name="Keim P.S."/>
            <person name="Salzberg S.L."/>
            <person name="Fraser-Liggett C.M."/>
            <person name="Rasko D.A."/>
        </authorList>
    </citation>
    <scope>NUCLEOTIDE SEQUENCE [LARGE SCALE GENOMIC DNA]</scope>
    <source>
        <strain>Ames ancestor</strain>
    </source>
</reference>
<reference key="3">
    <citation type="submission" date="2004-01" db="EMBL/GenBank/DDBJ databases">
        <title>Complete genome sequence of Bacillus anthracis Sterne.</title>
        <authorList>
            <person name="Brettin T.S."/>
            <person name="Bruce D."/>
            <person name="Challacombe J.F."/>
            <person name="Gilna P."/>
            <person name="Han C."/>
            <person name="Hill K."/>
            <person name="Hitchcock P."/>
            <person name="Jackson P."/>
            <person name="Keim P."/>
            <person name="Longmire J."/>
            <person name="Lucas S."/>
            <person name="Okinaka R."/>
            <person name="Richardson P."/>
            <person name="Rubin E."/>
            <person name="Tice H."/>
        </authorList>
    </citation>
    <scope>NUCLEOTIDE SEQUENCE [LARGE SCALE GENOMIC DNA]</scope>
    <source>
        <strain>Sterne</strain>
    </source>
</reference>
<sequence>MSIFIGGAWPYANGSLHLGHIASLLPGDILARYYRAKGENVLYVSGSDCNGTPIAIRAKQEGVTAKEIANKYHEEFERCFRNLGFTYDCYTRTDSEHHHETVQNVFLRLLEEGHIYKKTVEQAYCETCTQFLPDCYVEGVCPHCHEEARGDQCDACSAILDPLDLLEKKCKLCGSTPSIQETEHFYFALHTFQEQIKRAVEIAKQTGTWRDNAIQLTERYVKEGLLDRAVSRDLPIGVPIPVEGYEDKKIYVWIEAVTGYYSASKHWAEETGKDDREFWDGEAKTYYVHGKDNIPFHSVIWPAVLLGIGEGTIPRHIVSNEYLTVEKRKLSTSKNWAVWVPDILERYDPDSIRYFLIVNAPENRDTDFSWREFIYSHNSELLGAYGNFVNRTLKFIEKYYGGIMPKGSIDVELKDKIERLYKHVGEAIEQTKFKVALESIFDAVRFANKYFDERQPWKEREDDPVSCEETIYNCVYLIANFANLLEPFLPFSSERIRNTLSIVNRNWEPQHTLPSRIDSVQPLFERIDVKQIECELEKLYGAVK</sequence>
<accession>Q81XF9</accession>
<accession>Q6HR94</accession>
<accession>Q6KKK9</accession>
<keyword id="KW-0030">Aminoacyl-tRNA synthetase</keyword>
<keyword id="KW-0067">ATP-binding</keyword>
<keyword id="KW-0963">Cytoplasm</keyword>
<keyword id="KW-0436">Ligase</keyword>
<keyword id="KW-0479">Metal-binding</keyword>
<keyword id="KW-0547">Nucleotide-binding</keyword>
<keyword id="KW-0648">Protein biosynthesis</keyword>
<keyword id="KW-1185">Reference proteome</keyword>
<keyword id="KW-0862">Zinc</keyword>
<dbReference type="EC" id="6.1.1.10" evidence="1"/>
<dbReference type="EMBL" id="AE016879">
    <property type="protein sequence ID" value="AAP28943.1"/>
    <property type="molecule type" value="Genomic_DNA"/>
</dbReference>
<dbReference type="EMBL" id="AE017334">
    <property type="protein sequence ID" value="AAT34410.1"/>
    <property type="molecule type" value="Genomic_DNA"/>
</dbReference>
<dbReference type="EMBL" id="AE017225">
    <property type="protein sequence ID" value="AAT57194.1"/>
    <property type="molecule type" value="Genomic_DNA"/>
</dbReference>
<dbReference type="RefSeq" id="NP_847457.1">
    <property type="nucleotide sequence ID" value="NC_003997.3"/>
</dbReference>
<dbReference type="RefSeq" id="YP_031144.1">
    <property type="nucleotide sequence ID" value="NC_005945.1"/>
</dbReference>
<dbReference type="SMR" id="Q81XF9"/>
<dbReference type="STRING" id="261594.GBAA_5278"/>
<dbReference type="DNASU" id="1084759"/>
<dbReference type="GeneID" id="45024892"/>
<dbReference type="KEGG" id="ban:BA_5278"/>
<dbReference type="KEGG" id="banh:HYU01_25810"/>
<dbReference type="KEGG" id="bar:GBAA_5278"/>
<dbReference type="KEGG" id="bat:BAS4903"/>
<dbReference type="PATRIC" id="fig|198094.11.peg.5240"/>
<dbReference type="eggNOG" id="COG0143">
    <property type="taxonomic scope" value="Bacteria"/>
</dbReference>
<dbReference type="HOGENOM" id="CLU_009710_1_2_9"/>
<dbReference type="OMA" id="YMRMAGH"/>
<dbReference type="OrthoDB" id="9810191at2"/>
<dbReference type="Proteomes" id="UP000000427">
    <property type="component" value="Chromosome"/>
</dbReference>
<dbReference type="Proteomes" id="UP000000594">
    <property type="component" value="Chromosome"/>
</dbReference>
<dbReference type="GO" id="GO:0005829">
    <property type="term" value="C:cytosol"/>
    <property type="evidence" value="ECO:0007669"/>
    <property type="project" value="TreeGrafter"/>
</dbReference>
<dbReference type="GO" id="GO:0005524">
    <property type="term" value="F:ATP binding"/>
    <property type="evidence" value="ECO:0007669"/>
    <property type="project" value="UniProtKB-UniRule"/>
</dbReference>
<dbReference type="GO" id="GO:0046872">
    <property type="term" value="F:metal ion binding"/>
    <property type="evidence" value="ECO:0007669"/>
    <property type="project" value="UniProtKB-KW"/>
</dbReference>
<dbReference type="GO" id="GO:0004825">
    <property type="term" value="F:methionine-tRNA ligase activity"/>
    <property type="evidence" value="ECO:0007669"/>
    <property type="project" value="UniProtKB-UniRule"/>
</dbReference>
<dbReference type="GO" id="GO:0006431">
    <property type="term" value="P:methionyl-tRNA aminoacylation"/>
    <property type="evidence" value="ECO:0007669"/>
    <property type="project" value="UniProtKB-UniRule"/>
</dbReference>
<dbReference type="CDD" id="cd07957">
    <property type="entry name" value="Anticodon_Ia_Met"/>
    <property type="match status" value="1"/>
</dbReference>
<dbReference type="CDD" id="cd00814">
    <property type="entry name" value="MetRS_core"/>
    <property type="match status" value="1"/>
</dbReference>
<dbReference type="FunFam" id="1.10.730.10:FF:000041">
    <property type="entry name" value="Methionine--tRNA ligase"/>
    <property type="match status" value="1"/>
</dbReference>
<dbReference type="FunFam" id="2.20.28.20:FF:000001">
    <property type="entry name" value="Methionine--tRNA ligase"/>
    <property type="match status" value="1"/>
</dbReference>
<dbReference type="Gene3D" id="3.40.50.620">
    <property type="entry name" value="HUPs"/>
    <property type="match status" value="1"/>
</dbReference>
<dbReference type="Gene3D" id="1.10.730.10">
    <property type="entry name" value="Isoleucyl-tRNA Synthetase, Domain 1"/>
    <property type="match status" value="1"/>
</dbReference>
<dbReference type="Gene3D" id="2.20.28.20">
    <property type="entry name" value="Methionyl-tRNA synthetase, Zn-domain"/>
    <property type="match status" value="1"/>
</dbReference>
<dbReference type="HAMAP" id="MF_00098">
    <property type="entry name" value="Met_tRNA_synth_type1"/>
    <property type="match status" value="1"/>
</dbReference>
<dbReference type="InterPro" id="IPR001412">
    <property type="entry name" value="aa-tRNA-synth_I_CS"/>
</dbReference>
<dbReference type="InterPro" id="IPR041872">
    <property type="entry name" value="Anticodon_Met"/>
</dbReference>
<dbReference type="InterPro" id="IPR023458">
    <property type="entry name" value="Met-tRNA_ligase_1"/>
</dbReference>
<dbReference type="InterPro" id="IPR014758">
    <property type="entry name" value="Met-tRNA_synth"/>
</dbReference>
<dbReference type="InterPro" id="IPR015413">
    <property type="entry name" value="Methionyl/Leucyl_tRNA_Synth"/>
</dbReference>
<dbReference type="InterPro" id="IPR033911">
    <property type="entry name" value="MetRS_core"/>
</dbReference>
<dbReference type="InterPro" id="IPR029038">
    <property type="entry name" value="MetRS_Zn"/>
</dbReference>
<dbReference type="InterPro" id="IPR014729">
    <property type="entry name" value="Rossmann-like_a/b/a_fold"/>
</dbReference>
<dbReference type="InterPro" id="IPR009080">
    <property type="entry name" value="tRNAsynth_Ia_anticodon-bd"/>
</dbReference>
<dbReference type="NCBIfam" id="TIGR00398">
    <property type="entry name" value="metG"/>
    <property type="match status" value="1"/>
</dbReference>
<dbReference type="PANTHER" id="PTHR45765">
    <property type="entry name" value="METHIONINE--TRNA LIGASE"/>
    <property type="match status" value="1"/>
</dbReference>
<dbReference type="PANTHER" id="PTHR45765:SF1">
    <property type="entry name" value="METHIONINE--TRNA LIGASE, CYTOPLASMIC"/>
    <property type="match status" value="1"/>
</dbReference>
<dbReference type="Pfam" id="PF19303">
    <property type="entry name" value="Anticodon_3"/>
    <property type="match status" value="1"/>
</dbReference>
<dbReference type="Pfam" id="PF09334">
    <property type="entry name" value="tRNA-synt_1g"/>
    <property type="match status" value="1"/>
</dbReference>
<dbReference type="PRINTS" id="PR01041">
    <property type="entry name" value="TRNASYNTHMET"/>
</dbReference>
<dbReference type="SUPFAM" id="SSF47323">
    <property type="entry name" value="Anticodon-binding domain of a subclass of class I aminoacyl-tRNA synthetases"/>
    <property type="match status" value="1"/>
</dbReference>
<dbReference type="SUPFAM" id="SSF57770">
    <property type="entry name" value="Methionyl-tRNA synthetase (MetRS), Zn-domain"/>
    <property type="match status" value="1"/>
</dbReference>
<dbReference type="SUPFAM" id="SSF52374">
    <property type="entry name" value="Nucleotidylyl transferase"/>
    <property type="match status" value="1"/>
</dbReference>
<dbReference type="PROSITE" id="PS00178">
    <property type="entry name" value="AA_TRNA_LIGASE_I"/>
    <property type="match status" value="1"/>
</dbReference>
<organism>
    <name type="scientific">Bacillus anthracis</name>
    <dbReference type="NCBI Taxonomy" id="1392"/>
    <lineage>
        <taxon>Bacteria</taxon>
        <taxon>Bacillati</taxon>
        <taxon>Bacillota</taxon>
        <taxon>Bacilli</taxon>
        <taxon>Bacillales</taxon>
        <taxon>Bacillaceae</taxon>
        <taxon>Bacillus</taxon>
        <taxon>Bacillus cereus group</taxon>
    </lineage>
</organism>
<proteinExistence type="inferred from homology"/>
<evidence type="ECO:0000255" key="1">
    <source>
        <dbReference type="HAMAP-Rule" id="MF_00098"/>
    </source>
</evidence>
<gene>
    <name evidence="1" type="primary">metG2</name>
    <name type="ordered locus">BA_5278</name>
    <name type="ordered locus">GBAA_5278</name>
    <name type="ordered locus">BAS4903</name>
</gene>
<name>SYM2_BACAN</name>
<protein>
    <recommendedName>
        <fullName evidence="1">Methionine--tRNA ligase 2</fullName>
        <ecNumber evidence="1">6.1.1.10</ecNumber>
    </recommendedName>
    <alternativeName>
        <fullName evidence="1">Methionyl-tRNA synthetase 2</fullName>
        <shortName evidence="1">MetRS 2</shortName>
    </alternativeName>
</protein>